<dbReference type="EMBL" id="CP001657">
    <property type="protein sequence ID" value="ACT12011.1"/>
    <property type="molecule type" value="Genomic_DNA"/>
</dbReference>
<dbReference type="RefSeq" id="WP_010285748.1">
    <property type="nucleotide sequence ID" value="NC_012917.1"/>
</dbReference>
<dbReference type="SMR" id="C6DAK3"/>
<dbReference type="STRING" id="561230.PC1_0961"/>
<dbReference type="KEGG" id="pct:PC1_0961"/>
<dbReference type="eggNOG" id="ENOG5032Z3X">
    <property type="taxonomic scope" value="Bacteria"/>
</dbReference>
<dbReference type="HOGENOM" id="CLU_190008_0_0_6"/>
<dbReference type="OrthoDB" id="5900992at2"/>
<dbReference type="Proteomes" id="UP000002736">
    <property type="component" value="Chromosome"/>
</dbReference>
<dbReference type="HAMAP" id="MF_01064">
    <property type="entry name" value="UPF0253"/>
    <property type="match status" value="1"/>
</dbReference>
<dbReference type="InterPro" id="IPR009624">
    <property type="entry name" value="UPF0253"/>
</dbReference>
<dbReference type="NCBIfam" id="NF003436">
    <property type="entry name" value="PRK04964.1"/>
    <property type="match status" value="1"/>
</dbReference>
<dbReference type="Pfam" id="PF06786">
    <property type="entry name" value="UPF0253"/>
    <property type="match status" value="1"/>
</dbReference>
<evidence type="ECO:0000255" key="1">
    <source>
        <dbReference type="HAMAP-Rule" id="MF_01064"/>
    </source>
</evidence>
<accession>C6DAK3</accession>
<name>Y961_PECCP</name>
<feature type="chain" id="PRO_1000213463" description="UPF0253 protein PC1_0961">
    <location>
        <begin position="1"/>
        <end position="66"/>
    </location>
</feature>
<gene>
    <name type="ordered locus">PC1_0961</name>
</gene>
<reference key="1">
    <citation type="submission" date="2009-07" db="EMBL/GenBank/DDBJ databases">
        <title>Complete sequence of Pectobacterium carotovorum subsp. carotovorum PC1.</title>
        <authorList>
            <consortium name="US DOE Joint Genome Institute"/>
            <person name="Lucas S."/>
            <person name="Copeland A."/>
            <person name="Lapidus A."/>
            <person name="Glavina del Rio T."/>
            <person name="Tice H."/>
            <person name="Bruce D."/>
            <person name="Goodwin L."/>
            <person name="Pitluck S."/>
            <person name="Munk A.C."/>
            <person name="Brettin T."/>
            <person name="Detter J.C."/>
            <person name="Han C."/>
            <person name="Tapia R."/>
            <person name="Larimer F."/>
            <person name="Land M."/>
            <person name="Hauser L."/>
            <person name="Kyrpides N."/>
            <person name="Mikhailova N."/>
            <person name="Balakrishnan V."/>
            <person name="Glasner J."/>
            <person name="Perna N.T."/>
        </authorList>
    </citation>
    <scope>NUCLEOTIDE SEQUENCE [LARGE SCALE GENOMIC DNA]</scope>
    <source>
        <strain>PC1</strain>
    </source>
</reference>
<protein>
    <recommendedName>
        <fullName evidence="1">UPF0253 protein PC1_0961</fullName>
    </recommendedName>
</protein>
<organism>
    <name type="scientific">Pectobacterium carotovorum subsp. carotovorum (strain PC1)</name>
    <dbReference type="NCBI Taxonomy" id="561230"/>
    <lineage>
        <taxon>Bacteria</taxon>
        <taxon>Pseudomonadati</taxon>
        <taxon>Pseudomonadota</taxon>
        <taxon>Gammaproteobacteria</taxon>
        <taxon>Enterobacterales</taxon>
        <taxon>Pectobacteriaceae</taxon>
        <taxon>Pectobacterium</taxon>
    </lineage>
</organism>
<sequence>MQEYCELVRRLYAEIASGDLGYIPDSLGCVLKTLDGIAANDALPSSVREQAAFAAANLLVSDYVNE</sequence>
<comment type="similarity">
    <text evidence="1">Belongs to the UPF0253 family.</text>
</comment>
<proteinExistence type="inferred from homology"/>